<reference key="1">
    <citation type="journal article" date="2001" name="Plant Cell">
        <title>The Arabidopsis HY2 gene encodes phytochromobilin synthase, a ferredoxin-dependent biliverdin reductase.</title>
        <authorList>
            <person name="Kohchi T."/>
            <person name="Mukougawa K."/>
            <person name="Frankenberg N."/>
            <person name="Masuda M."/>
            <person name="Yokota A."/>
            <person name="Lagarias J.C."/>
        </authorList>
    </citation>
    <scope>NUCLEOTIDE SEQUENCE [MRNA] (ISOFORM 1)</scope>
    <scope>FUNCTION</scope>
    <scope>CATALYTIC ACTIVITY</scope>
    <scope>SUBCELLULAR LOCATION</scope>
    <scope>DISRUPTION PHENOTYPE</scope>
</reference>
<reference key="2">
    <citation type="journal article" date="2000" name="Nature">
        <title>Sequence and analysis of chromosome 3 of the plant Arabidopsis thaliana.</title>
        <authorList>
            <person name="Salanoubat M."/>
            <person name="Lemcke K."/>
            <person name="Rieger M."/>
            <person name="Ansorge W."/>
            <person name="Unseld M."/>
            <person name="Fartmann B."/>
            <person name="Valle G."/>
            <person name="Bloecker H."/>
            <person name="Perez-Alonso M."/>
            <person name="Obermaier B."/>
            <person name="Delseny M."/>
            <person name="Boutry M."/>
            <person name="Grivell L.A."/>
            <person name="Mache R."/>
            <person name="Puigdomenech P."/>
            <person name="De Simone V."/>
            <person name="Choisne N."/>
            <person name="Artiguenave F."/>
            <person name="Robert C."/>
            <person name="Brottier P."/>
            <person name="Wincker P."/>
            <person name="Cattolico L."/>
            <person name="Weissenbach J."/>
            <person name="Saurin W."/>
            <person name="Quetier F."/>
            <person name="Schaefer M."/>
            <person name="Mueller-Auer S."/>
            <person name="Gabel C."/>
            <person name="Fuchs M."/>
            <person name="Benes V."/>
            <person name="Wurmbach E."/>
            <person name="Drzonek H."/>
            <person name="Erfle H."/>
            <person name="Jordan N."/>
            <person name="Bangert S."/>
            <person name="Wiedelmann R."/>
            <person name="Kranz H."/>
            <person name="Voss H."/>
            <person name="Holland R."/>
            <person name="Brandt P."/>
            <person name="Nyakatura G."/>
            <person name="Vezzi A."/>
            <person name="D'Angelo M."/>
            <person name="Pallavicini A."/>
            <person name="Toppo S."/>
            <person name="Simionati B."/>
            <person name="Conrad A."/>
            <person name="Hornischer K."/>
            <person name="Kauer G."/>
            <person name="Loehnert T.-H."/>
            <person name="Nordsiek G."/>
            <person name="Reichelt J."/>
            <person name="Scharfe M."/>
            <person name="Schoen O."/>
            <person name="Bargues M."/>
            <person name="Terol J."/>
            <person name="Climent J."/>
            <person name="Navarro P."/>
            <person name="Collado C."/>
            <person name="Perez-Perez A."/>
            <person name="Ottenwaelder B."/>
            <person name="Duchemin D."/>
            <person name="Cooke R."/>
            <person name="Laudie M."/>
            <person name="Berger-Llauro C."/>
            <person name="Purnelle B."/>
            <person name="Masuy D."/>
            <person name="de Haan M."/>
            <person name="Maarse A.C."/>
            <person name="Alcaraz J.-P."/>
            <person name="Cottet A."/>
            <person name="Casacuberta E."/>
            <person name="Monfort A."/>
            <person name="Argiriou A."/>
            <person name="Flores M."/>
            <person name="Liguori R."/>
            <person name="Vitale D."/>
            <person name="Mannhaupt G."/>
            <person name="Haase D."/>
            <person name="Schoof H."/>
            <person name="Rudd S."/>
            <person name="Zaccaria P."/>
            <person name="Mewes H.-W."/>
            <person name="Mayer K.F.X."/>
            <person name="Kaul S."/>
            <person name="Town C.D."/>
            <person name="Koo H.L."/>
            <person name="Tallon L.J."/>
            <person name="Jenkins J."/>
            <person name="Rooney T."/>
            <person name="Rizzo M."/>
            <person name="Walts A."/>
            <person name="Utterback T."/>
            <person name="Fujii C.Y."/>
            <person name="Shea T.P."/>
            <person name="Creasy T.H."/>
            <person name="Haas B."/>
            <person name="Maiti R."/>
            <person name="Wu D."/>
            <person name="Peterson J."/>
            <person name="Van Aken S."/>
            <person name="Pai G."/>
            <person name="Militscher J."/>
            <person name="Sellers P."/>
            <person name="Gill J.E."/>
            <person name="Feldblyum T.V."/>
            <person name="Preuss D."/>
            <person name="Lin X."/>
            <person name="Nierman W.C."/>
            <person name="Salzberg S.L."/>
            <person name="White O."/>
            <person name="Venter J.C."/>
            <person name="Fraser C.M."/>
            <person name="Kaneko T."/>
            <person name="Nakamura Y."/>
            <person name="Sato S."/>
            <person name="Kato T."/>
            <person name="Asamizu E."/>
            <person name="Sasamoto S."/>
            <person name="Kimura T."/>
            <person name="Idesawa K."/>
            <person name="Kawashima K."/>
            <person name="Kishida Y."/>
            <person name="Kiyokawa C."/>
            <person name="Kohara M."/>
            <person name="Matsumoto M."/>
            <person name="Matsuno A."/>
            <person name="Muraki A."/>
            <person name="Nakayama S."/>
            <person name="Nakazaki N."/>
            <person name="Shinpo S."/>
            <person name="Takeuchi C."/>
            <person name="Wada T."/>
            <person name="Watanabe A."/>
            <person name="Yamada M."/>
            <person name="Yasuda M."/>
            <person name="Tabata S."/>
        </authorList>
    </citation>
    <scope>NUCLEOTIDE SEQUENCE [LARGE SCALE GENOMIC DNA]</scope>
    <source>
        <strain>cv. Columbia</strain>
    </source>
</reference>
<reference key="3">
    <citation type="journal article" date="2017" name="Plant J.">
        <title>Araport11: a complete reannotation of the Arabidopsis thaliana reference genome.</title>
        <authorList>
            <person name="Cheng C.Y."/>
            <person name="Krishnakumar V."/>
            <person name="Chan A.P."/>
            <person name="Thibaud-Nissen F."/>
            <person name="Schobel S."/>
            <person name="Town C.D."/>
        </authorList>
    </citation>
    <scope>GENOME REANNOTATION</scope>
    <source>
        <strain>cv. Columbia</strain>
    </source>
</reference>
<reference key="4">
    <citation type="journal article" date="2003" name="Science">
        <title>Empirical analysis of transcriptional activity in the Arabidopsis genome.</title>
        <authorList>
            <person name="Yamada K."/>
            <person name="Lim J."/>
            <person name="Dale J.M."/>
            <person name="Chen H."/>
            <person name="Shinn P."/>
            <person name="Palm C.J."/>
            <person name="Southwick A.M."/>
            <person name="Wu H.C."/>
            <person name="Kim C.J."/>
            <person name="Nguyen M."/>
            <person name="Pham P.K."/>
            <person name="Cheuk R.F."/>
            <person name="Karlin-Newmann G."/>
            <person name="Liu S.X."/>
            <person name="Lam B."/>
            <person name="Sakano H."/>
            <person name="Wu T."/>
            <person name="Yu G."/>
            <person name="Miranda M."/>
            <person name="Quach H.L."/>
            <person name="Tripp M."/>
            <person name="Chang C.H."/>
            <person name="Lee J.M."/>
            <person name="Toriumi M.J."/>
            <person name="Chan M.M."/>
            <person name="Tang C.C."/>
            <person name="Onodera C.S."/>
            <person name="Deng J.M."/>
            <person name="Akiyama K."/>
            <person name="Ansari Y."/>
            <person name="Arakawa T."/>
            <person name="Banh J."/>
            <person name="Banno F."/>
            <person name="Bowser L."/>
            <person name="Brooks S.Y."/>
            <person name="Carninci P."/>
            <person name="Chao Q."/>
            <person name="Choy N."/>
            <person name="Enju A."/>
            <person name="Goldsmith A.D."/>
            <person name="Gurjal M."/>
            <person name="Hansen N.F."/>
            <person name="Hayashizaki Y."/>
            <person name="Johnson-Hopson C."/>
            <person name="Hsuan V.W."/>
            <person name="Iida K."/>
            <person name="Karnes M."/>
            <person name="Khan S."/>
            <person name="Koesema E."/>
            <person name="Ishida J."/>
            <person name="Jiang P.X."/>
            <person name="Jones T."/>
            <person name="Kawai J."/>
            <person name="Kamiya A."/>
            <person name="Meyers C."/>
            <person name="Nakajima M."/>
            <person name="Narusaka M."/>
            <person name="Seki M."/>
            <person name="Sakurai T."/>
            <person name="Satou M."/>
            <person name="Tamse R."/>
            <person name="Vaysberg M."/>
            <person name="Wallender E.K."/>
            <person name="Wong C."/>
            <person name="Yamamura Y."/>
            <person name="Yuan S."/>
            <person name="Shinozaki K."/>
            <person name="Davis R.W."/>
            <person name="Theologis A."/>
            <person name="Ecker J.R."/>
        </authorList>
    </citation>
    <scope>NUCLEOTIDE SEQUENCE [LARGE SCALE MRNA] (ISOFORM 1)</scope>
    <source>
        <strain>cv. Columbia</strain>
    </source>
</reference>
<reference key="5">
    <citation type="submission" date="2002-03" db="EMBL/GenBank/DDBJ databases">
        <title>Full-length cDNA from Arabidopsis thaliana.</title>
        <authorList>
            <person name="Brover V.V."/>
            <person name="Troukhan M.E."/>
            <person name="Alexandrov N.A."/>
            <person name="Lu Y.-P."/>
            <person name="Flavell R.B."/>
            <person name="Feldmann K.A."/>
        </authorList>
    </citation>
    <scope>NUCLEOTIDE SEQUENCE [LARGE SCALE MRNA] (ISOFORM 2)</scope>
</reference>
<protein>
    <recommendedName>
        <fullName evidence="5">Phytochromobilin:ferredoxin oxidoreductase, chloroplastic</fullName>
        <ecNumber evidence="2">1.3.7.4</ecNumber>
    </recommendedName>
    <alternativeName>
        <fullName evidence="5">PFB synthase</fullName>
    </alternativeName>
    <alternativeName>
        <fullName evidence="5">PPhiB synthase</fullName>
    </alternativeName>
    <alternativeName>
        <fullName evidence="3">Phytochromobilin synthase</fullName>
    </alternativeName>
</protein>
<feature type="transit peptide" description="Chloroplast" evidence="1">
    <location>
        <begin position="1"/>
        <end position="45"/>
    </location>
</feature>
<feature type="chain" id="PRO_0000013609" description="Phytochromobilin:ferredoxin oxidoreductase, chloroplastic">
    <location>
        <begin position="46"/>
        <end position="329"/>
    </location>
</feature>
<feature type="splice variant" id="VSP_008970" description="In isoform 2." evidence="4">
    <location>
        <begin position="75"/>
        <end position="76"/>
    </location>
</feature>
<feature type="sequence conflict" description="In Ref. 5; AAM67180." evidence="5" ref="5">
    <original>K</original>
    <variation>N</variation>
    <location>
        <position position="39"/>
    </location>
</feature>
<sequence>MALSMEFGFSIGSCFKAPNPPVLISASPNKINFTLRRRKKRFLLRVSAVSYKEFAESALEETRKRIVLEPSHLQEKYSSMTGLDGKTELQMLAFKSSKIRLLRSMAIENETMQVFDFAGFMEPEYDTPIFCANFFTSTNVNIVVLDLNPLHQLTDQTDYQDKYYNKIMSIYHKYAETFPWGGKLTGESIKFFSPLVMWTRFSSSKEKHKALFSAFLEYYQAWLEMTIQVREEMEPSHVRANCEAQHKYLTWRAQKDPGHGLLKRLVGEAKAKELLRDFLFNGVDELGTKTFIDYFPEYQTEDGTVSDKRSIIGKSYETRPWDLTGQFIG</sequence>
<name>PFBS_ARATH</name>
<comment type="function">
    <text evidence="2">Catalyzes the two-electron reduction of biliverdin IX-alpha to the tetrapyrrole chromophore phytochromobilin (PPhiB).</text>
</comment>
<comment type="catalytic activity">
    <reaction evidence="2">
        <text>(3Z)-phytochromobilin + 2 oxidized [2Fe-2S]-[ferredoxin] = biliverdin IXalpha + 2 reduced [2Fe-2S]-[ferredoxin] + 2 H(+)</text>
        <dbReference type="Rhea" id="RHEA:16377"/>
        <dbReference type="Rhea" id="RHEA-COMP:10000"/>
        <dbReference type="Rhea" id="RHEA-COMP:10001"/>
        <dbReference type="ChEBI" id="CHEBI:15378"/>
        <dbReference type="ChEBI" id="CHEBI:33737"/>
        <dbReference type="ChEBI" id="CHEBI:33738"/>
        <dbReference type="ChEBI" id="CHEBI:57439"/>
        <dbReference type="ChEBI" id="CHEBI:57991"/>
        <dbReference type="EC" id="1.3.7.4"/>
    </reaction>
    <physiologicalReaction direction="right-to-left" evidence="2">
        <dbReference type="Rhea" id="RHEA:16379"/>
    </physiologicalReaction>
</comment>
<comment type="subcellular location">
    <subcellularLocation>
        <location evidence="2">Plastid</location>
        <location evidence="2">Chloroplast</location>
    </subcellularLocation>
</comment>
<comment type="alternative products">
    <event type="alternative splicing"/>
    <isoform>
        <id>Q9SR43-1</id>
        <name>1</name>
        <sequence type="displayed"/>
    </isoform>
    <isoform>
        <id>Q9SR43-2</id>
        <name>2</name>
        <sequence type="described" ref="VSP_008970"/>
    </isoform>
</comment>
<comment type="disruption phenotype">
    <text evidence="2">Elongated hypocotyl phenotype due to defect in the tetrapyrrole chromophore phytochromobilin biosynthesis.</text>
</comment>
<comment type="similarity">
    <text evidence="5">Belongs to the HY2 family.</text>
</comment>
<comment type="sequence caution" evidence="5">
    <conflict type="erroneous gene model prediction">
        <sequence resource="EMBL-CDS" id="AAD56331"/>
    </conflict>
</comment>
<comment type="sequence caution" evidence="5">
    <conflict type="erroneous initiation">
        <sequence resource="EMBL-CDS" id="AAM67180"/>
    </conflict>
</comment>
<keyword id="KW-0025">Alternative splicing</keyword>
<keyword id="KW-0150">Chloroplast</keyword>
<keyword id="KW-0560">Oxidoreductase</keyword>
<keyword id="KW-0934">Plastid</keyword>
<keyword id="KW-1185">Reference proteome</keyword>
<keyword id="KW-0809">Transit peptide</keyword>
<organism>
    <name type="scientific">Arabidopsis thaliana</name>
    <name type="common">Mouse-ear cress</name>
    <dbReference type="NCBI Taxonomy" id="3702"/>
    <lineage>
        <taxon>Eukaryota</taxon>
        <taxon>Viridiplantae</taxon>
        <taxon>Streptophyta</taxon>
        <taxon>Embryophyta</taxon>
        <taxon>Tracheophyta</taxon>
        <taxon>Spermatophyta</taxon>
        <taxon>Magnoliopsida</taxon>
        <taxon>eudicotyledons</taxon>
        <taxon>Gunneridae</taxon>
        <taxon>Pentapetalae</taxon>
        <taxon>rosids</taxon>
        <taxon>malvids</taxon>
        <taxon>Brassicales</taxon>
        <taxon>Brassicaceae</taxon>
        <taxon>Camelineae</taxon>
        <taxon>Arabidopsis</taxon>
    </lineage>
</organism>
<accession>Q9SR43</accession>
<accession>Q8L8Q6</accession>
<accession>Q9SS72</accession>
<gene>
    <name evidence="3" type="primary">HY2</name>
    <name evidence="6" type="ordered locus">At3g09150</name>
    <name evidence="8" type="ORF">F3L24.1</name>
    <name evidence="7" type="ORF">MZB10.18</name>
</gene>
<proteinExistence type="evidence at protein level"/>
<evidence type="ECO:0000255" key="1"/>
<evidence type="ECO:0000269" key="2">
    <source>
    </source>
</evidence>
<evidence type="ECO:0000303" key="3">
    <source>
    </source>
</evidence>
<evidence type="ECO:0000303" key="4">
    <source ref="5"/>
</evidence>
<evidence type="ECO:0000305" key="5"/>
<evidence type="ECO:0000312" key="6">
    <source>
        <dbReference type="Araport" id="AT3G09150"/>
    </source>
</evidence>
<evidence type="ECO:0000312" key="7">
    <source>
        <dbReference type="EMBL" id="AAD56331.1"/>
    </source>
</evidence>
<evidence type="ECO:0000312" key="8">
    <source>
        <dbReference type="EMBL" id="AAF14017.1"/>
    </source>
</evidence>
<dbReference type="EC" id="1.3.7.4" evidence="2"/>
<dbReference type="EMBL" id="AB045112">
    <property type="protein sequence ID" value="BAB33374.1"/>
    <property type="molecule type" value="mRNA"/>
</dbReference>
<dbReference type="EMBL" id="AC009326">
    <property type="protein sequence ID" value="AAD56331.1"/>
    <property type="status" value="ALT_SEQ"/>
    <property type="molecule type" value="Genomic_DNA"/>
</dbReference>
<dbReference type="EMBL" id="AC011436">
    <property type="protein sequence ID" value="AAF14017.1"/>
    <property type="molecule type" value="Genomic_DNA"/>
</dbReference>
<dbReference type="EMBL" id="CP002686">
    <property type="protein sequence ID" value="AEE74730.1"/>
    <property type="molecule type" value="Genomic_DNA"/>
</dbReference>
<dbReference type="EMBL" id="CP002686">
    <property type="protein sequence ID" value="AEE74731.1"/>
    <property type="molecule type" value="Genomic_DNA"/>
</dbReference>
<dbReference type="EMBL" id="AY099706">
    <property type="protein sequence ID" value="AAM20557.1"/>
    <property type="molecule type" value="mRNA"/>
</dbReference>
<dbReference type="EMBL" id="AY128900">
    <property type="protein sequence ID" value="AAM91300.1"/>
    <property type="molecule type" value="mRNA"/>
</dbReference>
<dbReference type="EMBL" id="AY088874">
    <property type="protein sequence ID" value="AAM67180.1"/>
    <property type="status" value="ALT_INIT"/>
    <property type="molecule type" value="mRNA"/>
</dbReference>
<dbReference type="RefSeq" id="NP_566344.2">
    <molecule id="Q9SR43-1"/>
    <property type="nucleotide sequence ID" value="NM_111750.4"/>
</dbReference>
<dbReference type="RefSeq" id="NP_850996.1">
    <molecule id="Q9SR43-2"/>
    <property type="nucleotide sequence ID" value="NM_180665.1"/>
</dbReference>
<dbReference type="SMR" id="Q9SR43"/>
<dbReference type="BioGRID" id="5403">
    <property type="interactions" value="3"/>
</dbReference>
<dbReference type="FunCoup" id="Q9SR43">
    <property type="interactions" value="406"/>
</dbReference>
<dbReference type="STRING" id="3702.Q9SR43"/>
<dbReference type="PaxDb" id="3702-AT3G09150.2"/>
<dbReference type="ProteomicsDB" id="236313">
    <molecule id="Q9SR43-1"/>
</dbReference>
<dbReference type="EnsemblPlants" id="AT3G09150.1">
    <molecule id="Q9SR43-2"/>
    <property type="protein sequence ID" value="AT3G09150.1"/>
    <property type="gene ID" value="AT3G09150"/>
</dbReference>
<dbReference type="EnsemblPlants" id="AT3G09150.2">
    <molecule id="Q9SR43-1"/>
    <property type="protein sequence ID" value="AT3G09150.2"/>
    <property type="gene ID" value="AT3G09150"/>
</dbReference>
<dbReference type="GeneID" id="820069"/>
<dbReference type="Gramene" id="AT3G09150.1">
    <molecule id="Q9SR43-2"/>
    <property type="protein sequence ID" value="AT3G09150.1"/>
    <property type="gene ID" value="AT3G09150"/>
</dbReference>
<dbReference type="Gramene" id="AT3G09150.2">
    <molecule id="Q9SR43-1"/>
    <property type="protein sequence ID" value="AT3G09150.2"/>
    <property type="gene ID" value="AT3G09150"/>
</dbReference>
<dbReference type="KEGG" id="ath:AT3G09150"/>
<dbReference type="Araport" id="AT3G09150"/>
<dbReference type="TAIR" id="AT3G09150">
    <property type="gene designation" value="HY2"/>
</dbReference>
<dbReference type="eggNOG" id="ENOG502QXET">
    <property type="taxonomic scope" value="Eukaryota"/>
</dbReference>
<dbReference type="InParanoid" id="Q9SR43"/>
<dbReference type="PhylomeDB" id="Q9SR43"/>
<dbReference type="BioCyc" id="ARA:AT3G09150-MONOMER"/>
<dbReference type="BioCyc" id="MetaCyc:AT3G09150-MONOMER"/>
<dbReference type="BRENDA" id="1.3.7.4">
    <property type="organism ID" value="399"/>
</dbReference>
<dbReference type="PRO" id="PR:Q9SR43"/>
<dbReference type="Proteomes" id="UP000006548">
    <property type="component" value="Chromosome 3"/>
</dbReference>
<dbReference type="ExpressionAtlas" id="Q9SR43">
    <property type="expression patterns" value="baseline and differential"/>
</dbReference>
<dbReference type="GO" id="GO:0009507">
    <property type="term" value="C:chloroplast"/>
    <property type="evidence" value="ECO:0000314"/>
    <property type="project" value="TAIR"/>
</dbReference>
<dbReference type="GO" id="GO:0050897">
    <property type="term" value="F:cobalt ion binding"/>
    <property type="evidence" value="ECO:0007669"/>
    <property type="project" value="InterPro"/>
</dbReference>
<dbReference type="GO" id="GO:0050619">
    <property type="term" value="F:phytochromobilin:ferredoxin oxidoreductase activity"/>
    <property type="evidence" value="ECO:0000314"/>
    <property type="project" value="TAIR"/>
</dbReference>
<dbReference type="GO" id="GO:0010019">
    <property type="term" value="P:chloroplast-nucleus signaling pathway"/>
    <property type="evidence" value="ECO:0000315"/>
    <property type="project" value="TAIR"/>
</dbReference>
<dbReference type="GO" id="GO:0010024">
    <property type="term" value="P:phytochromobilin biosynthetic process"/>
    <property type="evidence" value="ECO:0007669"/>
    <property type="project" value="InterPro"/>
</dbReference>
<dbReference type="FunFam" id="3.40.1500.20:FF:000002">
    <property type="entry name" value="Phytochromobilin:ferredoxin oxidoreductase, chloroplast / phytochromobilin synthase (HY2)"/>
    <property type="match status" value="1"/>
</dbReference>
<dbReference type="Gene3D" id="3.40.1500.20">
    <property type="match status" value="1"/>
</dbReference>
<dbReference type="InterPro" id="IPR009249">
    <property type="entry name" value="Ferredoxin-dep_bilin_Rdtase"/>
</dbReference>
<dbReference type="PANTHER" id="PTHR34557">
    <property type="entry name" value="PHYTOCHROMOBILIN:FERREDOXIN OXIDOREDUCTASE, CHLOROPLASTIC"/>
    <property type="match status" value="1"/>
</dbReference>
<dbReference type="PANTHER" id="PTHR34557:SF1">
    <property type="entry name" value="PHYTOCHROMOBILIN:FERREDOXIN OXIDOREDUCTASE, CHLOROPLASTIC"/>
    <property type="match status" value="1"/>
</dbReference>
<dbReference type="Pfam" id="PF05996">
    <property type="entry name" value="Fe_bilin_red"/>
    <property type="match status" value="1"/>
</dbReference>